<proteinExistence type="inferred from homology"/>
<accession>A8GMX9</accession>
<sequence length="444" mass="49353">MRNIIYFILLLLFSFKGYALETINIEHGQAAPTPIAVNKFNIDSSADYVLGNDVVKVISNDLKLSGVFCPISSASFIEERTGIEYKPLFAAWRQINASLLVNGEIKKLESGKLKISFILWDTLLEKQLAGEILEVPENLWRRAAHKIADKIYEKITGDAGYFDTKIVYVSESTSLPKIKRIALMDYDGANNKYLTNGRSLVLTPRFARSADKIFYVSYATKRRALVYEKDLKTGKESVVGDFSGISFAPRFSPDGRKAVMSIAKNGSTHIYEIDLATKRLHKLTDGFGINTSPSYSPDGKKIVYNSDRNGVPQLYIMNSDGSDVQRISFGGGSYTAPSWSPRGDYIAFTKIIRGAEGKTFNIGIMKAYPQDDENRERIITSGYLVESPCWSPNGRVIMFAKGWPSGAKAPGKNKIFAIDLTGHNEREIITPEDASDPEWSGVLN</sequence>
<protein>
    <recommendedName>
        <fullName evidence="1">Tol-Pal system protein TolB</fullName>
    </recommendedName>
</protein>
<evidence type="ECO:0000255" key="1">
    <source>
        <dbReference type="HAMAP-Rule" id="MF_00671"/>
    </source>
</evidence>
<name>TOLB_RICAH</name>
<comment type="function">
    <text evidence="1">Part of the Tol-Pal system, which plays a role in outer membrane invagination during cell division and is important for maintaining outer membrane integrity.</text>
</comment>
<comment type="subunit">
    <text evidence="1">The Tol-Pal system is composed of five core proteins: the inner membrane proteins TolA, TolQ and TolR, the periplasmic protein TolB and the outer membrane protein Pal. They form a network linking the inner and outer membranes and the peptidoglycan layer.</text>
</comment>
<comment type="subcellular location">
    <subcellularLocation>
        <location evidence="1">Periplasm</location>
    </subcellularLocation>
</comment>
<comment type="similarity">
    <text evidence="1">Belongs to the TolB family.</text>
</comment>
<gene>
    <name evidence="1" type="primary">tolB</name>
    <name type="ordered locus">A1C_02265</name>
</gene>
<feature type="signal peptide" evidence="1">
    <location>
        <begin position="1"/>
        <end position="19"/>
    </location>
</feature>
<feature type="chain" id="PRO_1000026707" description="Tol-Pal system protein TolB" evidence="1">
    <location>
        <begin position="20"/>
        <end position="444"/>
    </location>
</feature>
<organism>
    <name type="scientific">Rickettsia akari (strain Hartford)</name>
    <dbReference type="NCBI Taxonomy" id="293614"/>
    <lineage>
        <taxon>Bacteria</taxon>
        <taxon>Pseudomonadati</taxon>
        <taxon>Pseudomonadota</taxon>
        <taxon>Alphaproteobacteria</taxon>
        <taxon>Rickettsiales</taxon>
        <taxon>Rickettsiaceae</taxon>
        <taxon>Rickettsieae</taxon>
        <taxon>Rickettsia</taxon>
        <taxon>spotted fever group</taxon>
    </lineage>
</organism>
<keyword id="KW-0131">Cell cycle</keyword>
<keyword id="KW-0132">Cell division</keyword>
<keyword id="KW-0574">Periplasm</keyword>
<keyword id="KW-0732">Signal</keyword>
<reference key="1">
    <citation type="submission" date="2007-09" db="EMBL/GenBank/DDBJ databases">
        <title>Complete genome sequence of Rickettsia akari.</title>
        <authorList>
            <person name="Madan A."/>
            <person name="Fahey J."/>
            <person name="Helton E."/>
            <person name="Ketteman M."/>
            <person name="Madan A."/>
            <person name="Rodrigues S."/>
            <person name="Sanchez A."/>
            <person name="Whiting M."/>
            <person name="Dasch G."/>
            <person name="Eremeeva M."/>
        </authorList>
    </citation>
    <scope>NUCLEOTIDE SEQUENCE [LARGE SCALE GENOMIC DNA]</scope>
    <source>
        <strain>Hartford</strain>
    </source>
</reference>
<dbReference type="EMBL" id="CP000847">
    <property type="protein sequence ID" value="ABV74754.1"/>
    <property type="molecule type" value="Genomic_DNA"/>
</dbReference>
<dbReference type="RefSeq" id="WP_012149388.1">
    <property type="nucleotide sequence ID" value="NC_009881.1"/>
</dbReference>
<dbReference type="SMR" id="A8GMX9"/>
<dbReference type="STRING" id="293614.A1C_02265"/>
<dbReference type="KEGG" id="rak:A1C_02265"/>
<dbReference type="eggNOG" id="COG0823">
    <property type="taxonomic scope" value="Bacteria"/>
</dbReference>
<dbReference type="HOGENOM" id="CLU_047123_0_0_5"/>
<dbReference type="Proteomes" id="UP000006830">
    <property type="component" value="Chromosome"/>
</dbReference>
<dbReference type="GO" id="GO:0042597">
    <property type="term" value="C:periplasmic space"/>
    <property type="evidence" value="ECO:0007669"/>
    <property type="project" value="UniProtKB-SubCell"/>
</dbReference>
<dbReference type="GO" id="GO:0051301">
    <property type="term" value="P:cell division"/>
    <property type="evidence" value="ECO:0007669"/>
    <property type="project" value="UniProtKB-UniRule"/>
</dbReference>
<dbReference type="GO" id="GO:0017038">
    <property type="term" value="P:protein import"/>
    <property type="evidence" value="ECO:0007669"/>
    <property type="project" value="InterPro"/>
</dbReference>
<dbReference type="Gene3D" id="2.120.10.30">
    <property type="entry name" value="TolB, C-terminal domain"/>
    <property type="match status" value="1"/>
</dbReference>
<dbReference type="Gene3D" id="3.40.50.10070">
    <property type="entry name" value="TolB, N-terminal domain"/>
    <property type="match status" value="1"/>
</dbReference>
<dbReference type="HAMAP" id="MF_00671">
    <property type="entry name" value="TolB"/>
    <property type="match status" value="1"/>
</dbReference>
<dbReference type="InterPro" id="IPR011042">
    <property type="entry name" value="6-blade_b-propeller_TolB-like"/>
</dbReference>
<dbReference type="InterPro" id="IPR011659">
    <property type="entry name" value="PD40"/>
</dbReference>
<dbReference type="InterPro" id="IPR014167">
    <property type="entry name" value="Tol-Pal_TolB"/>
</dbReference>
<dbReference type="InterPro" id="IPR007195">
    <property type="entry name" value="TolB_N"/>
</dbReference>
<dbReference type="NCBIfam" id="TIGR02800">
    <property type="entry name" value="propeller_TolB"/>
    <property type="match status" value="1"/>
</dbReference>
<dbReference type="PANTHER" id="PTHR36842:SF1">
    <property type="entry name" value="PROTEIN TOLB"/>
    <property type="match status" value="1"/>
</dbReference>
<dbReference type="PANTHER" id="PTHR36842">
    <property type="entry name" value="PROTEIN TOLB HOMOLOG"/>
    <property type="match status" value="1"/>
</dbReference>
<dbReference type="Pfam" id="PF07676">
    <property type="entry name" value="PD40"/>
    <property type="match status" value="4"/>
</dbReference>
<dbReference type="Pfam" id="PF04052">
    <property type="entry name" value="TolB_N"/>
    <property type="match status" value="1"/>
</dbReference>
<dbReference type="SUPFAM" id="SSF52964">
    <property type="entry name" value="TolB, N-terminal domain"/>
    <property type="match status" value="1"/>
</dbReference>
<dbReference type="SUPFAM" id="SSF69304">
    <property type="entry name" value="Tricorn protease N-terminal domain"/>
    <property type="match status" value="1"/>
</dbReference>